<dbReference type="EMBL" id="DQ291132">
    <property type="protein sequence ID" value="ABB81991.1"/>
    <property type="molecule type" value="Genomic_DNA"/>
</dbReference>
<dbReference type="RefSeq" id="YP_635830.1">
    <property type="nucleotide sequence ID" value="NC_008099.1"/>
</dbReference>
<dbReference type="SMR" id="Q20F15"/>
<dbReference type="GeneID" id="4100167"/>
<dbReference type="GO" id="GO:0009535">
    <property type="term" value="C:chloroplast thylakoid membrane"/>
    <property type="evidence" value="ECO:0007669"/>
    <property type="project" value="UniProtKB-SubCell"/>
</dbReference>
<dbReference type="GO" id="GO:0009539">
    <property type="term" value="C:photosystem II reaction center"/>
    <property type="evidence" value="ECO:0007669"/>
    <property type="project" value="InterPro"/>
</dbReference>
<dbReference type="GO" id="GO:0015979">
    <property type="term" value="P:photosynthesis"/>
    <property type="evidence" value="ECO:0007669"/>
    <property type="project" value="UniProtKB-UniRule"/>
</dbReference>
<dbReference type="HAMAP" id="MF_00808">
    <property type="entry name" value="PSII_PsbT"/>
    <property type="match status" value="1"/>
</dbReference>
<dbReference type="InterPro" id="IPR001743">
    <property type="entry name" value="PSII_PsbT"/>
</dbReference>
<dbReference type="InterPro" id="IPR037268">
    <property type="entry name" value="PSII_PsbT_sf"/>
</dbReference>
<dbReference type="PANTHER" id="PTHR36411">
    <property type="match status" value="1"/>
</dbReference>
<dbReference type="PANTHER" id="PTHR36411:SF2">
    <property type="entry name" value="PHOTOSYSTEM II REACTION CENTER PROTEIN T"/>
    <property type="match status" value="1"/>
</dbReference>
<dbReference type="Pfam" id="PF01405">
    <property type="entry name" value="PsbT"/>
    <property type="match status" value="1"/>
</dbReference>
<dbReference type="SUPFAM" id="SSF161029">
    <property type="entry name" value="Photosystem II reaction center protein T, PsbT"/>
    <property type="match status" value="1"/>
</dbReference>
<feature type="chain" id="PRO_0000276304" description="Photosystem II reaction center protein T">
    <location>
        <begin position="1"/>
        <end position="31"/>
    </location>
</feature>
<feature type="transmembrane region" description="Helical" evidence="1">
    <location>
        <begin position="3"/>
        <end position="23"/>
    </location>
</feature>
<evidence type="ECO:0000255" key="1">
    <source>
        <dbReference type="HAMAP-Rule" id="MF_00808"/>
    </source>
</evidence>
<accession>Q20F15</accession>
<reference key="1">
    <citation type="journal article" date="2006" name="BMC Biol.">
        <title>The complete chloroplast DNA sequence of the green alga Oltmannsiellopsis viridis reveals a distinctive quadripartite architecture in the chloroplast genome of early diverging ulvophytes.</title>
        <authorList>
            <person name="Pombert J.-F."/>
            <person name="Lemieux C."/>
            <person name="Turmel M."/>
        </authorList>
    </citation>
    <scope>NUCLEOTIDE SEQUENCE [LARGE SCALE GENOMIC DNA]</scope>
</reference>
<comment type="function">
    <text evidence="1">Found at the monomer-monomer interface of the photosystem II (PS II) dimer, plays a role in assembly and dimerization of PSII. PSII is a light-driven water plastoquinone oxidoreductase, using light energy to abstract electrons from H(2)O, generating a proton gradient subsequently used for ATP formation.</text>
</comment>
<comment type="subunit">
    <text evidence="1">PSII is composed of 1 copy each of membrane proteins PsbA, PsbB, PsbC, PsbD, PsbE, PsbF, PsbH, PsbI, PsbJ, PsbK, PsbL, PsbM, PsbT, PsbY, PsbZ, Psb30/Ycf12, at least 3 peripheral proteins of the oxygen-evolving complex and a large number of cofactors. It forms dimeric complexes.</text>
</comment>
<comment type="subcellular location">
    <subcellularLocation>
        <location evidence="1">Plastid</location>
        <location evidence="1">Chloroplast thylakoid membrane</location>
        <topology evidence="1">Single-pass membrane protein</topology>
    </subcellularLocation>
</comment>
<comment type="similarity">
    <text evidence="1">Belongs to the PsbT family.</text>
</comment>
<keyword id="KW-0150">Chloroplast</keyword>
<keyword id="KW-0472">Membrane</keyword>
<keyword id="KW-0602">Photosynthesis</keyword>
<keyword id="KW-0604">Photosystem II</keyword>
<keyword id="KW-0934">Plastid</keyword>
<keyword id="KW-0793">Thylakoid</keyword>
<keyword id="KW-0812">Transmembrane</keyword>
<keyword id="KW-1133">Transmembrane helix</keyword>
<protein>
    <recommendedName>
        <fullName evidence="1">Photosystem II reaction center protein T</fullName>
        <shortName evidence="1">PSII-T</shortName>
    </recommendedName>
</protein>
<geneLocation type="chloroplast"/>
<sequence length="31" mass="3602">MEALVYTFLLVGTLGIIFFAIFFREPPRIVK</sequence>
<proteinExistence type="inferred from homology"/>
<name>PSBT_OLTVI</name>
<organism>
    <name type="scientific">Oltmannsiellopsis viridis</name>
    <name type="common">Marine flagellate</name>
    <name type="synonym">Oltmannsiella viridis</name>
    <dbReference type="NCBI Taxonomy" id="51324"/>
    <lineage>
        <taxon>Eukaryota</taxon>
        <taxon>Viridiplantae</taxon>
        <taxon>Chlorophyta</taxon>
        <taxon>Ulvophyceae</taxon>
        <taxon>Oltmannsiellopsidales</taxon>
        <taxon>Oltmannsiellopsidaceae</taxon>
        <taxon>Oltmannsiellopsis</taxon>
    </lineage>
</organism>
<gene>
    <name evidence="1" type="primary">psbT</name>
</gene>